<accession>A1K4Y1</accession>
<keyword id="KW-0067">ATP-binding</keyword>
<keyword id="KW-0436">Ligase</keyword>
<keyword id="KW-0460">Magnesium</keyword>
<keyword id="KW-0479">Metal-binding</keyword>
<keyword id="KW-0547">Nucleotide-binding</keyword>
<keyword id="KW-0658">Purine biosynthesis</keyword>
<keyword id="KW-1185">Reference proteome</keyword>
<dbReference type="EC" id="6.3.1.21" evidence="1"/>
<dbReference type="EMBL" id="AM406670">
    <property type="protein sequence ID" value="CAL93886.1"/>
    <property type="molecule type" value="Genomic_DNA"/>
</dbReference>
<dbReference type="RefSeq" id="WP_011765002.1">
    <property type="nucleotide sequence ID" value="NC_008702.1"/>
</dbReference>
<dbReference type="SMR" id="A1K4Y1"/>
<dbReference type="STRING" id="62928.azo1269"/>
<dbReference type="KEGG" id="azo:azo1269"/>
<dbReference type="eggNOG" id="COG0027">
    <property type="taxonomic scope" value="Bacteria"/>
</dbReference>
<dbReference type="HOGENOM" id="CLU_011534_1_3_4"/>
<dbReference type="UniPathway" id="UPA00074">
    <property type="reaction ID" value="UER00127"/>
</dbReference>
<dbReference type="Proteomes" id="UP000002588">
    <property type="component" value="Chromosome"/>
</dbReference>
<dbReference type="GO" id="GO:0005829">
    <property type="term" value="C:cytosol"/>
    <property type="evidence" value="ECO:0007669"/>
    <property type="project" value="TreeGrafter"/>
</dbReference>
<dbReference type="GO" id="GO:0005524">
    <property type="term" value="F:ATP binding"/>
    <property type="evidence" value="ECO:0007669"/>
    <property type="project" value="UniProtKB-UniRule"/>
</dbReference>
<dbReference type="GO" id="GO:0000287">
    <property type="term" value="F:magnesium ion binding"/>
    <property type="evidence" value="ECO:0007669"/>
    <property type="project" value="InterPro"/>
</dbReference>
<dbReference type="GO" id="GO:0043815">
    <property type="term" value="F:phosphoribosylglycinamide formyltransferase 2 activity"/>
    <property type="evidence" value="ECO:0007669"/>
    <property type="project" value="UniProtKB-UniRule"/>
</dbReference>
<dbReference type="GO" id="GO:0004644">
    <property type="term" value="F:phosphoribosylglycinamide formyltransferase activity"/>
    <property type="evidence" value="ECO:0007669"/>
    <property type="project" value="InterPro"/>
</dbReference>
<dbReference type="GO" id="GO:0006189">
    <property type="term" value="P:'de novo' IMP biosynthetic process"/>
    <property type="evidence" value="ECO:0007669"/>
    <property type="project" value="UniProtKB-UniRule"/>
</dbReference>
<dbReference type="FunFam" id="3.30.1490.20:FF:000013">
    <property type="entry name" value="Formate-dependent phosphoribosylglycinamide formyltransferase"/>
    <property type="match status" value="1"/>
</dbReference>
<dbReference type="FunFam" id="3.30.470.20:FF:000027">
    <property type="entry name" value="Formate-dependent phosphoribosylglycinamide formyltransferase"/>
    <property type="match status" value="1"/>
</dbReference>
<dbReference type="FunFam" id="3.40.50.20:FF:000007">
    <property type="entry name" value="Formate-dependent phosphoribosylglycinamide formyltransferase"/>
    <property type="match status" value="1"/>
</dbReference>
<dbReference type="Gene3D" id="3.40.50.20">
    <property type="match status" value="1"/>
</dbReference>
<dbReference type="Gene3D" id="3.30.1490.20">
    <property type="entry name" value="ATP-grasp fold, A domain"/>
    <property type="match status" value="1"/>
</dbReference>
<dbReference type="Gene3D" id="3.30.470.20">
    <property type="entry name" value="ATP-grasp fold, B domain"/>
    <property type="match status" value="1"/>
</dbReference>
<dbReference type="HAMAP" id="MF_01643">
    <property type="entry name" value="PurT"/>
    <property type="match status" value="1"/>
</dbReference>
<dbReference type="InterPro" id="IPR011761">
    <property type="entry name" value="ATP-grasp"/>
</dbReference>
<dbReference type="InterPro" id="IPR003135">
    <property type="entry name" value="ATP-grasp_carboxylate-amine"/>
</dbReference>
<dbReference type="InterPro" id="IPR013815">
    <property type="entry name" value="ATP_grasp_subdomain_1"/>
</dbReference>
<dbReference type="InterPro" id="IPR016185">
    <property type="entry name" value="PreATP-grasp_dom_sf"/>
</dbReference>
<dbReference type="InterPro" id="IPR005862">
    <property type="entry name" value="PurT"/>
</dbReference>
<dbReference type="InterPro" id="IPR054350">
    <property type="entry name" value="PurT/PurK_preATP-grasp"/>
</dbReference>
<dbReference type="InterPro" id="IPR048740">
    <property type="entry name" value="PurT_C"/>
</dbReference>
<dbReference type="NCBIfam" id="NF006766">
    <property type="entry name" value="PRK09288.1"/>
    <property type="match status" value="1"/>
</dbReference>
<dbReference type="NCBIfam" id="TIGR01142">
    <property type="entry name" value="purT"/>
    <property type="match status" value="1"/>
</dbReference>
<dbReference type="PANTHER" id="PTHR43055">
    <property type="entry name" value="FORMATE-DEPENDENT PHOSPHORIBOSYLGLYCINAMIDE FORMYLTRANSFERASE"/>
    <property type="match status" value="1"/>
</dbReference>
<dbReference type="PANTHER" id="PTHR43055:SF1">
    <property type="entry name" value="FORMATE-DEPENDENT PHOSPHORIBOSYLGLYCINAMIDE FORMYLTRANSFERASE"/>
    <property type="match status" value="1"/>
</dbReference>
<dbReference type="Pfam" id="PF02222">
    <property type="entry name" value="ATP-grasp"/>
    <property type="match status" value="1"/>
</dbReference>
<dbReference type="Pfam" id="PF21244">
    <property type="entry name" value="PurT_C"/>
    <property type="match status" value="1"/>
</dbReference>
<dbReference type="Pfam" id="PF22660">
    <property type="entry name" value="RS_preATP-grasp-like"/>
    <property type="match status" value="1"/>
</dbReference>
<dbReference type="SUPFAM" id="SSF56059">
    <property type="entry name" value="Glutathione synthetase ATP-binding domain-like"/>
    <property type="match status" value="1"/>
</dbReference>
<dbReference type="SUPFAM" id="SSF52440">
    <property type="entry name" value="PreATP-grasp domain"/>
    <property type="match status" value="1"/>
</dbReference>
<dbReference type="PROSITE" id="PS50975">
    <property type="entry name" value="ATP_GRASP"/>
    <property type="match status" value="1"/>
</dbReference>
<feature type="chain" id="PRO_0000319122" description="Formate-dependent phosphoribosylglycinamide formyltransferase">
    <location>
        <begin position="1"/>
        <end position="393"/>
    </location>
</feature>
<feature type="domain" description="ATP-grasp" evidence="1">
    <location>
        <begin position="119"/>
        <end position="308"/>
    </location>
</feature>
<feature type="binding site" evidence="1">
    <location>
        <begin position="22"/>
        <end position="23"/>
    </location>
    <ligand>
        <name>N(1)-(5-phospho-beta-D-ribosyl)glycinamide</name>
        <dbReference type="ChEBI" id="CHEBI:143788"/>
    </ligand>
</feature>
<feature type="binding site" evidence="1">
    <location>
        <position position="82"/>
    </location>
    <ligand>
        <name>N(1)-(5-phospho-beta-D-ribosyl)glycinamide</name>
        <dbReference type="ChEBI" id="CHEBI:143788"/>
    </ligand>
</feature>
<feature type="binding site" evidence="1">
    <location>
        <position position="114"/>
    </location>
    <ligand>
        <name>ATP</name>
        <dbReference type="ChEBI" id="CHEBI:30616"/>
    </ligand>
</feature>
<feature type="binding site" evidence="1">
    <location>
        <position position="155"/>
    </location>
    <ligand>
        <name>ATP</name>
        <dbReference type="ChEBI" id="CHEBI:30616"/>
    </ligand>
</feature>
<feature type="binding site" evidence="1">
    <location>
        <begin position="160"/>
        <end position="165"/>
    </location>
    <ligand>
        <name>ATP</name>
        <dbReference type="ChEBI" id="CHEBI:30616"/>
    </ligand>
</feature>
<feature type="binding site" evidence="1">
    <location>
        <begin position="195"/>
        <end position="198"/>
    </location>
    <ligand>
        <name>ATP</name>
        <dbReference type="ChEBI" id="CHEBI:30616"/>
    </ligand>
</feature>
<feature type="binding site" evidence="1">
    <location>
        <position position="203"/>
    </location>
    <ligand>
        <name>ATP</name>
        <dbReference type="ChEBI" id="CHEBI:30616"/>
    </ligand>
</feature>
<feature type="binding site" evidence="1">
    <location>
        <position position="267"/>
    </location>
    <ligand>
        <name>Mg(2+)</name>
        <dbReference type="ChEBI" id="CHEBI:18420"/>
    </ligand>
</feature>
<feature type="binding site" evidence="1">
    <location>
        <position position="279"/>
    </location>
    <ligand>
        <name>Mg(2+)</name>
        <dbReference type="ChEBI" id="CHEBI:18420"/>
    </ligand>
</feature>
<feature type="binding site" evidence="1">
    <location>
        <position position="286"/>
    </location>
    <ligand>
        <name>N(1)-(5-phospho-beta-D-ribosyl)glycinamide</name>
        <dbReference type="ChEBI" id="CHEBI:143788"/>
    </ligand>
</feature>
<feature type="binding site" evidence="1">
    <location>
        <position position="356"/>
    </location>
    <ligand>
        <name>N(1)-(5-phospho-beta-D-ribosyl)glycinamide</name>
        <dbReference type="ChEBI" id="CHEBI:143788"/>
    </ligand>
</feature>
<feature type="binding site" evidence="1">
    <location>
        <begin position="363"/>
        <end position="364"/>
    </location>
    <ligand>
        <name>N(1)-(5-phospho-beta-D-ribosyl)glycinamide</name>
        <dbReference type="ChEBI" id="CHEBI:143788"/>
    </ligand>
</feature>
<organism>
    <name type="scientific">Azoarcus sp. (strain BH72)</name>
    <dbReference type="NCBI Taxonomy" id="418699"/>
    <lineage>
        <taxon>Bacteria</taxon>
        <taxon>Pseudomonadati</taxon>
        <taxon>Pseudomonadota</taxon>
        <taxon>Betaproteobacteria</taxon>
        <taxon>Rhodocyclales</taxon>
        <taxon>Zoogloeaceae</taxon>
        <taxon>Azoarcus</taxon>
    </lineage>
</organism>
<sequence>MPRIGTPLSPTATRVLLCGSGELGKEVVIELQRLGCEVIAVDRYPNAPAMQVAHRNHVISMLDGAALRAVIEQEKPHYIVPEIEAIATATLVELEAEGYTVIPTARAAQLTMNREGIRRLAAEELGLPTSPYRFADSYEDYAAAVAALGFPCVVKPIMSSSGKGQSLLRGPDDVKKAWDYAQEGGRAGKGRVIVEGFIDFDYEITLLTVRHAGGTTFCAPVGHRQEKGDYQESWQPQPMSAKAIAESERIALAVTGALGGRGLFGVELFIKGDMVWFSEVSPRPHDTGLVTLISQDLSEFALHARAILGLPIPAIRQVGPSASAVILVEGESTQPSFSNLGAALAEPDTALRLFGKPEVKGQRRMGVALARDESIEAARAKALRAAQAVKVEL</sequence>
<proteinExistence type="inferred from homology"/>
<gene>
    <name evidence="1" type="primary">purT</name>
    <name type="ordered locus">azo1269</name>
</gene>
<comment type="function">
    <text evidence="1">Involved in the de novo purine biosynthesis. Catalyzes the transfer of formate to 5-phospho-ribosyl-glycinamide (GAR), producing 5-phospho-ribosyl-N-formylglycinamide (FGAR). Formate is provided by PurU via hydrolysis of 10-formyl-tetrahydrofolate.</text>
</comment>
<comment type="catalytic activity">
    <reaction evidence="1">
        <text>N(1)-(5-phospho-beta-D-ribosyl)glycinamide + formate + ATP = N(2)-formyl-N(1)-(5-phospho-beta-D-ribosyl)glycinamide + ADP + phosphate + H(+)</text>
        <dbReference type="Rhea" id="RHEA:24829"/>
        <dbReference type="ChEBI" id="CHEBI:15378"/>
        <dbReference type="ChEBI" id="CHEBI:15740"/>
        <dbReference type="ChEBI" id="CHEBI:30616"/>
        <dbReference type="ChEBI" id="CHEBI:43474"/>
        <dbReference type="ChEBI" id="CHEBI:143788"/>
        <dbReference type="ChEBI" id="CHEBI:147286"/>
        <dbReference type="ChEBI" id="CHEBI:456216"/>
        <dbReference type="EC" id="6.3.1.21"/>
    </reaction>
    <physiologicalReaction direction="left-to-right" evidence="1">
        <dbReference type="Rhea" id="RHEA:24830"/>
    </physiologicalReaction>
</comment>
<comment type="pathway">
    <text evidence="1">Purine metabolism; IMP biosynthesis via de novo pathway; N(2)-formyl-N(1)-(5-phospho-D-ribosyl)glycinamide from N(1)-(5-phospho-D-ribosyl)glycinamide (formate route): step 1/1.</text>
</comment>
<comment type="subunit">
    <text evidence="1">Homodimer.</text>
</comment>
<comment type="similarity">
    <text evidence="1">Belongs to the PurK/PurT family.</text>
</comment>
<name>PURT_AZOSB</name>
<protein>
    <recommendedName>
        <fullName evidence="1">Formate-dependent phosphoribosylglycinamide formyltransferase</fullName>
        <ecNumber evidence="1">6.3.1.21</ecNumber>
    </recommendedName>
    <alternativeName>
        <fullName evidence="1">5'-phosphoribosylglycinamide transformylase 2</fullName>
    </alternativeName>
    <alternativeName>
        <fullName evidence="1">Formate-dependent GAR transformylase</fullName>
    </alternativeName>
    <alternativeName>
        <fullName evidence="1">GAR transformylase 2</fullName>
        <shortName evidence="1">GART 2</shortName>
    </alternativeName>
    <alternativeName>
        <fullName evidence="1">Non-folate glycinamide ribonucleotide transformylase</fullName>
    </alternativeName>
    <alternativeName>
        <fullName evidence="1">Phosphoribosylglycinamide formyltransferase 2</fullName>
    </alternativeName>
</protein>
<evidence type="ECO:0000255" key="1">
    <source>
        <dbReference type="HAMAP-Rule" id="MF_01643"/>
    </source>
</evidence>
<reference key="1">
    <citation type="journal article" date="2006" name="Nat. Biotechnol.">
        <title>Complete genome of the mutualistic, N2-fixing grass endophyte Azoarcus sp. strain BH72.</title>
        <authorList>
            <person name="Krause A."/>
            <person name="Ramakumar A."/>
            <person name="Bartels D."/>
            <person name="Battistoni F."/>
            <person name="Bekel T."/>
            <person name="Boch J."/>
            <person name="Boehm M."/>
            <person name="Friedrich F."/>
            <person name="Hurek T."/>
            <person name="Krause L."/>
            <person name="Linke B."/>
            <person name="McHardy A.C."/>
            <person name="Sarkar A."/>
            <person name="Schneiker S."/>
            <person name="Syed A.A."/>
            <person name="Thauer R."/>
            <person name="Vorhoelter F.-J."/>
            <person name="Weidner S."/>
            <person name="Puehler A."/>
            <person name="Reinhold-Hurek B."/>
            <person name="Kaiser O."/>
            <person name="Goesmann A."/>
        </authorList>
    </citation>
    <scope>NUCLEOTIDE SEQUENCE [LARGE SCALE GENOMIC DNA]</scope>
    <source>
        <strain>BH72</strain>
    </source>
</reference>